<evidence type="ECO:0000255" key="1">
    <source>
        <dbReference type="HAMAP-Rule" id="MF_01102"/>
    </source>
</evidence>
<protein>
    <recommendedName>
        <fullName evidence="1">tRNA 5-methylaminomethyl-2-thiouridine biosynthesis bifunctional protein MnmC</fullName>
        <shortName evidence="1">tRNA mnm(5)s(2)U biosynthesis bifunctional protein</shortName>
    </recommendedName>
    <domain>
        <recommendedName>
            <fullName evidence="1">tRNA (mnm(5)s(2)U34)-methyltransferase</fullName>
            <ecNumber evidence="1">2.1.1.61</ecNumber>
        </recommendedName>
    </domain>
    <domain>
        <recommendedName>
            <fullName evidence="1">FAD-dependent cmnm(5)s(2)U34 oxidoreductase</fullName>
            <ecNumber evidence="1">1.5.-.-</ecNumber>
        </recommendedName>
    </domain>
</protein>
<reference key="1">
    <citation type="journal article" date="2005" name="J. Bacteriol.">
        <title>Genomic sequence of an otitis media isolate of nontypeable Haemophilus influenzae: comparative study with H. influenzae serotype d, strain KW20.</title>
        <authorList>
            <person name="Harrison A."/>
            <person name="Dyer D.W."/>
            <person name="Gillaspy A."/>
            <person name="Ray W.C."/>
            <person name="Mungur R."/>
            <person name="Carson M.B."/>
            <person name="Zhong H."/>
            <person name="Gipson J."/>
            <person name="Gipson M."/>
            <person name="Johnson L.S."/>
            <person name="Lewis L."/>
            <person name="Bakaletz L.O."/>
            <person name="Munson R.S. Jr."/>
        </authorList>
    </citation>
    <scope>NUCLEOTIDE SEQUENCE [LARGE SCALE GENOMIC DNA]</scope>
    <source>
        <strain>86-028NP</strain>
    </source>
</reference>
<name>MNMC_HAEI8</name>
<dbReference type="EC" id="2.1.1.61" evidence="1"/>
<dbReference type="EC" id="1.5.-.-" evidence="1"/>
<dbReference type="EMBL" id="CP000057">
    <property type="protein sequence ID" value="AAX88401.1"/>
    <property type="molecule type" value="Genomic_DNA"/>
</dbReference>
<dbReference type="RefSeq" id="WP_011272553.1">
    <property type="nucleotide sequence ID" value="NC_007146.2"/>
</dbReference>
<dbReference type="SMR" id="Q4QKP6"/>
<dbReference type="KEGG" id="hit:NTHI1599"/>
<dbReference type="HOGENOM" id="CLU_022427_2_1_6"/>
<dbReference type="Proteomes" id="UP000002525">
    <property type="component" value="Chromosome"/>
</dbReference>
<dbReference type="GO" id="GO:0005737">
    <property type="term" value="C:cytoplasm"/>
    <property type="evidence" value="ECO:0007669"/>
    <property type="project" value="UniProtKB-SubCell"/>
</dbReference>
<dbReference type="GO" id="GO:0050660">
    <property type="term" value="F:flavin adenine dinucleotide binding"/>
    <property type="evidence" value="ECO:0007669"/>
    <property type="project" value="UniProtKB-UniRule"/>
</dbReference>
<dbReference type="GO" id="GO:0016645">
    <property type="term" value="F:oxidoreductase activity, acting on the CH-NH group of donors"/>
    <property type="evidence" value="ECO:0007669"/>
    <property type="project" value="InterPro"/>
</dbReference>
<dbReference type="GO" id="GO:0004808">
    <property type="term" value="F:tRNA (5-methylaminomethyl-2-thiouridylate)(34)-methyltransferase activity"/>
    <property type="evidence" value="ECO:0007669"/>
    <property type="project" value="UniProtKB-EC"/>
</dbReference>
<dbReference type="GO" id="GO:0032259">
    <property type="term" value="P:methylation"/>
    <property type="evidence" value="ECO:0007669"/>
    <property type="project" value="UniProtKB-KW"/>
</dbReference>
<dbReference type="GO" id="GO:0002098">
    <property type="term" value="P:tRNA wobble uridine modification"/>
    <property type="evidence" value="ECO:0007669"/>
    <property type="project" value="TreeGrafter"/>
</dbReference>
<dbReference type="FunFam" id="3.40.50.150:FF:000107">
    <property type="entry name" value="tRNA 5-methylaminomethyl-2-thiouridine biosynthesis bifunctional protein MnmC"/>
    <property type="match status" value="1"/>
</dbReference>
<dbReference type="Gene3D" id="3.30.9.10">
    <property type="entry name" value="D-Amino Acid Oxidase, subunit A, domain 2"/>
    <property type="match status" value="1"/>
</dbReference>
<dbReference type="Gene3D" id="3.50.50.60">
    <property type="entry name" value="FAD/NAD(P)-binding domain"/>
    <property type="match status" value="1"/>
</dbReference>
<dbReference type="Gene3D" id="3.40.50.150">
    <property type="entry name" value="Vaccinia Virus protein VP39"/>
    <property type="match status" value="1"/>
</dbReference>
<dbReference type="HAMAP" id="MF_01102">
    <property type="entry name" value="MnmC"/>
    <property type="match status" value="1"/>
</dbReference>
<dbReference type="InterPro" id="IPR006076">
    <property type="entry name" value="FAD-dep_OxRdtase"/>
</dbReference>
<dbReference type="InterPro" id="IPR036188">
    <property type="entry name" value="FAD/NAD-bd_sf"/>
</dbReference>
<dbReference type="InterPro" id="IPR008471">
    <property type="entry name" value="MnmC-like_methylTransf"/>
</dbReference>
<dbReference type="InterPro" id="IPR029063">
    <property type="entry name" value="SAM-dependent_MTases_sf"/>
</dbReference>
<dbReference type="InterPro" id="IPR023032">
    <property type="entry name" value="tRNA_MAMT_biosynth_bifunc_MnmC"/>
</dbReference>
<dbReference type="InterPro" id="IPR047785">
    <property type="entry name" value="tRNA_MNMC2"/>
</dbReference>
<dbReference type="InterPro" id="IPR017610">
    <property type="entry name" value="tRNA_S-uridine_synth_MnmC_C"/>
</dbReference>
<dbReference type="NCBIfam" id="TIGR03197">
    <property type="entry name" value="MnmC_Cterm"/>
    <property type="match status" value="1"/>
</dbReference>
<dbReference type="NCBIfam" id="NF002481">
    <property type="entry name" value="PRK01747.1-2"/>
    <property type="match status" value="1"/>
</dbReference>
<dbReference type="NCBIfam" id="NF002484">
    <property type="entry name" value="PRK01747.1-5"/>
    <property type="match status" value="1"/>
</dbReference>
<dbReference type="NCBIfam" id="NF033855">
    <property type="entry name" value="tRNA_MNMC2"/>
    <property type="match status" value="1"/>
</dbReference>
<dbReference type="PANTHER" id="PTHR13847">
    <property type="entry name" value="SARCOSINE DEHYDROGENASE-RELATED"/>
    <property type="match status" value="1"/>
</dbReference>
<dbReference type="PANTHER" id="PTHR13847:SF283">
    <property type="entry name" value="TRNA 5-METHYLAMINOMETHYL-2-THIOURIDINE BIOSYNTHESIS BIFUNCTIONAL PROTEIN MNMC"/>
    <property type="match status" value="1"/>
</dbReference>
<dbReference type="Pfam" id="PF01266">
    <property type="entry name" value="DAO"/>
    <property type="match status" value="1"/>
</dbReference>
<dbReference type="Pfam" id="PF05430">
    <property type="entry name" value="Methyltransf_30"/>
    <property type="match status" value="1"/>
</dbReference>
<dbReference type="SUPFAM" id="SSF51905">
    <property type="entry name" value="FAD/NAD(P)-binding domain"/>
    <property type="match status" value="1"/>
</dbReference>
<feature type="chain" id="PRO_1000064996" description="tRNA 5-methylaminomethyl-2-thiouridine biosynthesis bifunctional protein MnmC">
    <location>
        <begin position="1"/>
        <end position="670"/>
    </location>
</feature>
<feature type="region of interest" description="tRNA (mnm(5)s(2)U34)-methyltransferase">
    <location>
        <begin position="1"/>
        <end position="242"/>
    </location>
</feature>
<feature type="region of interest" description="FAD-dependent cmnm(5)s(2)U34 oxidoreductase">
    <location>
        <begin position="269"/>
        <end position="670"/>
    </location>
</feature>
<keyword id="KW-0963">Cytoplasm</keyword>
<keyword id="KW-0274">FAD</keyword>
<keyword id="KW-0285">Flavoprotein</keyword>
<keyword id="KW-0489">Methyltransferase</keyword>
<keyword id="KW-0511">Multifunctional enzyme</keyword>
<keyword id="KW-0560">Oxidoreductase</keyword>
<keyword id="KW-0949">S-adenosyl-L-methionine</keyword>
<keyword id="KW-0808">Transferase</keyword>
<keyword id="KW-0819">tRNA processing</keyword>
<gene>
    <name evidence="1" type="primary">mnmC</name>
    <name type="ordered locus">NTHI1599</name>
</gene>
<comment type="function">
    <text evidence="1">Catalyzes the last two steps in the biosynthesis of 5-methylaminomethyl-2-thiouridine (mnm(5)s(2)U) at the wobble position (U34) in tRNA. Catalyzes the FAD-dependent demodification of cmnm(5)s(2)U34 to nm(5)s(2)U34, followed by the transfer of a methyl group from S-adenosyl-L-methionine to nm(5)s(2)U34, to form mnm(5)s(2)U34.</text>
</comment>
<comment type="catalytic activity">
    <reaction evidence="1">
        <text>5-aminomethyl-2-thiouridine(34) in tRNA + S-adenosyl-L-methionine = 5-methylaminomethyl-2-thiouridine(34) in tRNA + S-adenosyl-L-homocysteine + H(+)</text>
        <dbReference type="Rhea" id="RHEA:19569"/>
        <dbReference type="Rhea" id="RHEA-COMP:10195"/>
        <dbReference type="Rhea" id="RHEA-COMP:10197"/>
        <dbReference type="ChEBI" id="CHEBI:15378"/>
        <dbReference type="ChEBI" id="CHEBI:57856"/>
        <dbReference type="ChEBI" id="CHEBI:59789"/>
        <dbReference type="ChEBI" id="CHEBI:74454"/>
        <dbReference type="ChEBI" id="CHEBI:74455"/>
        <dbReference type="EC" id="2.1.1.61"/>
    </reaction>
</comment>
<comment type="cofactor">
    <cofactor evidence="1">
        <name>FAD</name>
        <dbReference type="ChEBI" id="CHEBI:57692"/>
    </cofactor>
</comment>
<comment type="subcellular location">
    <subcellularLocation>
        <location evidence="1">Cytoplasm</location>
    </subcellularLocation>
</comment>
<comment type="similarity">
    <text evidence="1">In the N-terminal section; belongs to the methyltransferase superfamily. tRNA (mnm(5)s(2)U34)-methyltransferase family.</text>
</comment>
<comment type="similarity">
    <text evidence="1">In the C-terminal section; belongs to the DAO family.</text>
</comment>
<organism>
    <name type="scientific">Haemophilus influenzae (strain 86-028NP)</name>
    <dbReference type="NCBI Taxonomy" id="281310"/>
    <lineage>
        <taxon>Bacteria</taxon>
        <taxon>Pseudomonadati</taxon>
        <taxon>Pseudomonadota</taxon>
        <taxon>Gammaproteobacteria</taxon>
        <taxon>Pasteurellales</taxon>
        <taxon>Pasteurellaceae</taxon>
        <taxon>Haemophilus</taxon>
    </lineage>
</organism>
<sequence>MTFSVQHAEIHFNRNHIPVSDQFNDVYFSNENGLAETDYVFLQGNQLWERWISHNEANFVIAETGFGTGLNFFAVTQLFREFRQQHENHPLKRLNFISFEKYPLKITALSQAHLAYPQFEDLSAHLQRYWPSLILGCHRIHFGETTLDLWLGNVSENLPQLGDYMNERIDAWFLDGFAPSKNPEMWNDDLYKLMFRFTKPNGSFATFTAASAVRKGLESAGFNVTKRKGFGKKRECLSGLKIQSKSTVLSTPWYLAQPAKMEKQDVAIIGGGIASFCAAISLVKRGAKVTIYCEDDALALNASGNKQGAFYPQLSDDNALTVDFYLHAFSYGRQLLDWAIEQNIEFEHEFCGVALCAYNEKSAVKLTKISQLGLPNEIFQMLSAEQLSEKVGLPLNCEGGWIEQGAWLAPRQFVQNAFSFLEKQGVIIKTSQKITALSQQEKGWELENTQGQKYCHEVVILANGYKITDFVQTEKLPLYPIRGQVSQIPTSENLLKLKSVLCYDGYLTPANQLKTSHCIGASHVRDNVDRHFSEQEQQENQQKLQQNIAQPWTQDVNTSDNLARVGIRCSVRDLAPMVGNVPHFEQQQADYYNLFNLRRRKQPIQSAANFQNIFLIAALGSRGLTSAPLLGETLASIIYGEPLPISEGILHNLSANRAWVKKWLKGSKVE</sequence>
<accession>Q4QKP6</accession>
<proteinExistence type="inferred from homology"/>